<dbReference type="EC" id="6.1.1.19"/>
<dbReference type="EMBL" id="AE016879">
    <property type="protein sequence ID" value="AAP26054.1"/>
    <property type="molecule type" value="Genomic_DNA"/>
</dbReference>
<dbReference type="EMBL" id="AE017334">
    <property type="protein sequence ID" value="AAT31293.1"/>
    <property type="molecule type" value="Genomic_DNA"/>
</dbReference>
<dbReference type="EMBL" id="AE017225">
    <property type="protein sequence ID" value="AAT54335.1"/>
    <property type="molecule type" value="Genomic_DNA"/>
</dbReference>
<dbReference type="RefSeq" id="NP_844568.1">
    <property type="nucleotide sequence ID" value="NC_003997.3"/>
</dbReference>
<dbReference type="RefSeq" id="YP_028284.1">
    <property type="nucleotide sequence ID" value="NC_005945.1"/>
</dbReference>
<dbReference type="SMR" id="Q81R81"/>
<dbReference type="STRING" id="261594.GBAA_2175"/>
<dbReference type="DNASU" id="1085743"/>
<dbReference type="GeneID" id="45022080"/>
<dbReference type="KEGG" id="ban:BA_2175"/>
<dbReference type="KEGG" id="bar:GBAA_2175"/>
<dbReference type="KEGG" id="bat:BAS2021"/>
<dbReference type="PATRIC" id="fig|198094.11.peg.2144"/>
<dbReference type="eggNOG" id="COG0018">
    <property type="taxonomic scope" value="Bacteria"/>
</dbReference>
<dbReference type="HOGENOM" id="CLU_006406_6_1_9"/>
<dbReference type="OMA" id="NKPLHLG"/>
<dbReference type="OrthoDB" id="9805987at2"/>
<dbReference type="Proteomes" id="UP000000427">
    <property type="component" value="Chromosome"/>
</dbReference>
<dbReference type="Proteomes" id="UP000000594">
    <property type="component" value="Chromosome"/>
</dbReference>
<dbReference type="GO" id="GO:0005737">
    <property type="term" value="C:cytoplasm"/>
    <property type="evidence" value="ECO:0007669"/>
    <property type="project" value="UniProtKB-SubCell"/>
</dbReference>
<dbReference type="GO" id="GO:0004814">
    <property type="term" value="F:arginine-tRNA ligase activity"/>
    <property type="evidence" value="ECO:0007669"/>
    <property type="project" value="UniProtKB-UniRule"/>
</dbReference>
<dbReference type="GO" id="GO:0005524">
    <property type="term" value="F:ATP binding"/>
    <property type="evidence" value="ECO:0007669"/>
    <property type="project" value="UniProtKB-UniRule"/>
</dbReference>
<dbReference type="GO" id="GO:0006420">
    <property type="term" value="P:arginyl-tRNA aminoacylation"/>
    <property type="evidence" value="ECO:0007669"/>
    <property type="project" value="UniProtKB-UniRule"/>
</dbReference>
<dbReference type="CDD" id="cd07956">
    <property type="entry name" value="Anticodon_Ia_Arg"/>
    <property type="match status" value="1"/>
</dbReference>
<dbReference type="CDD" id="cd00671">
    <property type="entry name" value="ArgRS_core"/>
    <property type="match status" value="1"/>
</dbReference>
<dbReference type="FunFam" id="3.40.50.620:FF:000116">
    <property type="entry name" value="Arginine--tRNA ligase"/>
    <property type="match status" value="1"/>
</dbReference>
<dbReference type="FunFam" id="1.10.730.10:FF:000006">
    <property type="entry name" value="Arginyl-tRNA synthetase 2, mitochondrial"/>
    <property type="match status" value="1"/>
</dbReference>
<dbReference type="Gene3D" id="3.30.1360.70">
    <property type="entry name" value="Arginyl tRNA synthetase N-terminal domain"/>
    <property type="match status" value="1"/>
</dbReference>
<dbReference type="Gene3D" id="3.40.50.620">
    <property type="entry name" value="HUPs"/>
    <property type="match status" value="1"/>
</dbReference>
<dbReference type="Gene3D" id="1.10.730.10">
    <property type="entry name" value="Isoleucyl-tRNA Synthetase, Domain 1"/>
    <property type="match status" value="1"/>
</dbReference>
<dbReference type="HAMAP" id="MF_00123">
    <property type="entry name" value="Arg_tRNA_synth"/>
    <property type="match status" value="1"/>
</dbReference>
<dbReference type="InterPro" id="IPR001278">
    <property type="entry name" value="Arg-tRNA-ligase"/>
</dbReference>
<dbReference type="InterPro" id="IPR005148">
    <property type="entry name" value="Arg-tRNA-synth_N"/>
</dbReference>
<dbReference type="InterPro" id="IPR036695">
    <property type="entry name" value="Arg-tRNA-synth_N_sf"/>
</dbReference>
<dbReference type="InterPro" id="IPR035684">
    <property type="entry name" value="ArgRS_core"/>
</dbReference>
<dbReference type="InterPro" id="IPR008909">
    <property type="entry name" value="DALR_anticod-bd"/>
</dbReference>
<dbReference type="InterPro" id="IPR014729">
    <property type="entry name" value="Rossmann-like_a/b/a_fold"/>
</dbReference>
<dbReference type="InterPro" id="IPR009080">
    <property type="entry name" value="tRNAsynth_Ia_anticodon-bd"/>
</dbReference>
<dbReference type="NCBIfam" id="TIGR00456">
    <property type="entry name" value="argS"/>
    <property type="match status" value="1"/>
</dbReference>
<dbReference type="PANTHER" id="PTHR11956:SF5">
    <property type="entry name" value="ARGININE--TRNA LIGASE, CYTOPLASMIC"/>
    <property type="match status" value="1"/>
</dbReference>
<dbReference type="PANTHER" id="PTHR11956">
    <property type="entry name" value="ARGINYL-TRNA SYNTHETASE"/>
    <property type="match status" value="1"/>
</dbReference>
<dbReference type="Pfam" id="PF03485">
    <property type="entry name" value="Arg_tRNA_synt_N"/>
    <property type="match status" value="1"/>
</dbReference>
<dbReference type="Pfam" id="PF05746">
    <property type="entry name" value="DALR_1"/>
    <property type="match status" value="1"/>
</dbReference>
<dbReference type="Pfam" id="PF00750">
    <property type="entry name" value="tRNA-synt_1d"/>
    <property type="match status" value="1"/>
</dbReference>
<dbReference type="PRINTS" id="PR01038">
    <property type="entry name" value="TRNASYNTHARG"/>
</dbReference>
<dbReference type="SMART" id="SM01016">
    <property type="entry name" value="Arg_tRNA_synt_N"/>
    <property type="match status" value="1"/>
</dbReference>
<dbReference type="SMART" id="SM00836">
    <property type="entry name" value="DALR_1"/>
    <property type="match status" value="1"/>
</dbReference>
<dbReference type="SUPFAM" id="SSF47323">
    <property type="entry name" value="Anticodon-binding domain of a subclass of class I aminoacyl-tRNA synthetases"/>
    <property type="match status" value="1"/>
</dbReference>
<dbReference type="SUPFAM" id="SSF55190">
    <property type="entry name" value="Arginyl-tRNA synthetase (ArgRS), N-terminal 'additional' domain"/>
    <property type="match status" value="1"/>
</dbReference>
<dbReference type="SUPFAM" id="SSF52374">
    <property type="entry name" value="Nucleotidylyl transferase"/>
    <property type="match status" value="1"/>
</dbReference>
<sequence>MDYKTQFAESLSNIFTNELTQQQILDLIETPKQDEFGDAAFPCFSLAKQYKKSPAIIAKEVAEKLSDPFFTKVEAVGPYVNVFFNRDTVSDAVLKTILAEKEEYGKNYFGCEKTVVIDYSSPNIAKPFSMGHLRSTMIGNSLKHIAEKCGYEVVGINYIGDWGTQFGKLITAYKKWGNEAVVKEDPIRELFKLYVQFHEEVKDDEELEEEGRAWFKKLEEGDEEAVELWNWFRHESLKEFSRIYELLGVEFTNFQGEAFYNNLMEDFIGILEEHDLLEESEGALVVNLEEEGMPPCLIRKSDGATIYATRDLTAALYRQNTFGFDKALYVVGPEQSLHFNQFFTVLKKLGYTWVDGMEHVPFGFILKDGKKMSTRKGRVILLEEVLEEAIELAKQNIEEKNPNLKQKEEVAKQVGAGAVIFHDLKNERMHNIEFSLENMLKFEGETGPYVQYTHARACSILRKESVEFETCTFALKDDHSWSVVKLLNKFPQVIEIAFNKNEPSVISKYVLDVAQSFNKYYGNVRILEESEEKDSRLALVYAVTVVLKEGLRLLGVEAPEEM</sequence>
<feature type="chain" id="PRO_0000151526" description="Arginine--tRNA ligase 2">
    <location>
        <begin position="1"/>
        <end position="562"/>
    </location>
</feature>
<feature type="short sequence motif" description="'HIGH' region">
    <location>
        <begin position="122"/>
        <end position="132"/>
    </location>
</feature>
<evidence type="ECO:0000250" key="1"/>
<evidence type="ECO:0000305" key="2"/>
<comment type="catalytic activity">
    <reaction>
        <text>tRNA(Arg) + L-arginine + ATP = L-arginyl-tRNA(Arg) + AMP + diphosphate</text>
        <dbReference type="Rhea" id="RHEA:20301"/>
        <dbReference type="Rhea" id="RHEA-COMP:9658"/>
        <dbReference type="Rhea" id="RHEA-COMP:9673"/>
        <dbReference type="ChEBI" id="CHEBI:30616"/>
        <dbReference type="ChEBI" id="CHEBI:32682"/>
        <dbReference type="ChEBI" id="CHEBI:33019"/>
        <dbReference type="ChEBI" id="CHEBI:78442"/>
        <dbReference type="ChEBI" id="CHEBI:78513"/>
        <dbReference type="ChEBI" id="CHEBI:456215"/>
        <dbReference type="EC" id="6.1.1.19"/>
    </reaction>
</comment>
<comment type="subunit">
    <text evidence="1">Monomer.</text>
</comment>
<comment type="subcellular location">
    <subcellularLocation>
        <location evidence="1">Cytoplasm</location>
    </subcellularLocation>
</comment>
<comment type="similarity">
    <text evidence="2">Belongs to the class-I aminoacyl-tRNA synthetase family.</text>
</comment>
<keyword id="KW-0030">Aminoacyl-tRNA synthetase</keyword>
<keyword id="KW-0067">ATP-binding</keyword>
<keyword id="KW-0963">Cytoplasm</keyword>
<keyword id="KW-0436">Ligase</keyword>
<keyword id="KW-0547">Nucleotide-binding</keyword>
<keyword id="KW-0648">Protein biosynthesis</keyword>
<keyword id="KW-1185">Reference proteome</keyword>
<reference key="1">
    <citation type="journal article" date="2003" name="Nature">
        <title>The genome sequence of Bacillus anthracis Ames and comparison to closely related bacteria.</title>
        <authorList>
            <person name="Read T.D."/>
            <person name="Peterson S.N."/>
            <person name="Tourasse N.J."/>
            <person name="Baillie L.W."/>
            <person name="Paulsen I.T."/>
            <person name="Nelson K.E."/>
            <person name="Tettelin H."/>
            <person name="Fouts D.E."/>
            <person name="Eisen J.A."/>
            <person name="Gill S.R."/>
            <person name="Holtzapple E.K."/>
            <person name="Okstad O.A."/>
            <person name="Helgason E."/>
            <person name="Rilstone J."/>
            <person name="Wu M."/>
            <person name="Kolonay J.F."/>
            <person name="Beanan M.J."/>
            <person name="Dodson R.J."/>
            <person name="Brinkac L.M."/>
            <person name="Gwinn M.L."/>
            <person name="DeBoy R.T."/>
            <person name="Madpu R."/>
            <person name="Daugherty S.C."/>
            <person name="Durkin A.S."/>
            <person name="Haft D.H."/>
            <person name="Nelson W.C."/>
            <person name="Peterson J.D."/>
            <person name="Pop M."/>
            <person name="Khouri H.M."/>
            <person name="Radune D."/>
            <person name="Benton J.L."/>
            <person name="Mahamoud Y."/>
            <person name="Jiang L."/>
            <person name="Hance I.R."/>
            <person name="Weidman J.F."/>
            <person name="Berry K.J."/>
            <person name="Plaut R.D."/>
            <person name="Wolf A.M."/>
            <person name="Watkins K.L."/>
            <person name="Nierman W.C."/>
            <person name="Hazen A."/>
            <person name="Cline R.T."/>
            <person name="Redmond C."/>
            <person name="Thwaite J.E."/>
            <person name="White O."/>
            <person name="Salzberg S.L."/>
            <person name="Thomason B."/>
            <person name="Friedlander A.M."/>
            <person name="Koehler T.M."/>
            <person name="Hanna P.C."/>
            <person name="Kolstoe A.-B."/>
            <person name="Fraser C.M."/>
        </authorList>
    </citation>
    <scope>NUCLEOTIDE SEQUENCE [LARGE SCALE GENOMIC DNA]</scope>
    <source>
        <strain>Ames / isolate Porton</strain>
    </source>
</reference>
<reference key="2">
    <citation type="journal article" date="2009" name="J. Bacteriol.">
        <title>The complete genome sequence of Bacillus anthracis Ames 'Ancestor'.</title>
        <authorList>
            <person name="Ravel J."/>
            <person name="Jiang L."/>
            <person name="Stanley S.T."/>
            <person name="Wilson M.R."/>
            <person name="Decker R.S."/>
            <person name="Read T.D."/>
            <person name="Worsham P."/>
            <person name="Keim P.S."/>
            <person name="Salzberg S.L."/>
            <person name="Fraser-Liggett C.M."/>
            <person name="Rasko D.A."/>
        </authorList>
    </citation>
    <scope>NUCLEOTIDE SEQUENCE [LARGE SCALE GENOMIC DNA]</scope>
    <source>
        <strain>Ames ancestor</strain>
    </source>
</reference>
<reference key="3">
    <citation type="submission" date="2004-01" db="EMBL/GenBank/DDBJ databases">
        <title>Complete genome sequence of Bacillus anthracis Sterne.</title>
        <authorList>
            <person name="Brettin T.S."/>
            <person name="Bruce D."/>
            <person name="Challacombe J.F."/>
            <person name="Gilna P."/>
            <person name="Han C."/>
            <person name="Hill K."/>
            <person name="Hitchcock P."/>
            <person name="Jackson P."/>
            <person name="Keim P."/>
            <person name="Longmire J."/>
            <person name="Lucas S."/>
            <person name="Okinaka R."/>
            <person name="Richardson P."/>
            <person name="Rubin E."/>
            <person name="Tice H."/>
        </authorList>
    </citation>
    <scope>NUCLEOTIDE SEQUENCE [LARGE SCALE GENOMIC DNA]</scope>
    <source>
        <strain>Sterne</strain>
    </source>
</reference>
<organism>
    <name type="scientific">Bacillus anthracis</name>
    <dbReference type="NCBI Taxonomy" id="1392"/>
    <lineage>
        <taxon>Bacteria</taxon>
        <taxon>Bacillati</taxon>
        <taxon>Bacillota</taxon>
        <taxon>Bacilli</taxon>
        <taxon>Bacillales</taxon>
        <taxon>Bacillaceae</taxon>
        <taxon>Bacillus</taxon>
        <taxon>Bacillus cereus group</taxon>
    </lineage>
</organism>
<proteinExistence type="inferred from homology"/>
<name>SYR2_BACAN</name>
<protein>
    <recommendedName>
        <fullName>Arginine--tRNA ligase 2</fullName>
        <ecNumber>6.1.1.19</ecNumber>
    </recommendedName>
    <alternativeName>
        <fullName>Arginyl-tRNA synthetase 2</fullName>
        <shortName>ArgRS 2</shortName>
    </alternativeName>
</protein>
<accession>Q81R81</accession>
<accession>Q6HZF4</accession>
<accession>Q6KTE3</accession>
<gene>
    <name type="primary">argS2</name>
    <name type="ordered locus">BA_2175</name>
    <name type="ordered locus">GBAA_2175</name>
    <name type="ordered locus">BAS2021</name>
</gene>